<evidence type="ECO:0000255" key="1">
    <source>
        <dbReference type="HAMAP-Rule" id="MF_01566"/>
    </source>
</evidence>
<evidence type="ECO:0000256" key="2">
    <source>
        <dbReference type="SAM" id="MobiDB-lite"/>
    </source>
</evidence>
<comment type="subcellular location">
    <subcellularLocation>
        <location evidence="1">Cell membrane</location>
        <topology evidence="1">Single-pass membrane protein</topology>
    </subcellularLocation>
</comment>
<comment type="similarity">
    <text evidence="1">Belongs to the UPF0370 family.</text>
</comment>
<feature type="chain" id="PRO_1000185458" description="UPF0370 protein YpfN">
    <location>
        <begin position="1"/>
        <end position="66"/>
    </location>
</feature>
<feature type="transmembrane region" description="Helical" evidence="1">
    <location>
        <begin position="4"/>
        <end position="24"/>
    </location>
</feature>
<feature type="region of interest" description="Disordered" evidence="2">
    <location>
        <begin position="39"/>
        <end position="66"/>
    </location>
</feature>
<feature type="compositionally biased region" description="Basic and acidic residues" evidence="2">
    <location>
        <begin position="42"/>
        <end position="51"/>
    </location>
</feature>
<dbReference type="EMBL" id="CP000857">
    <property type="protein sequence ID" value="ACN45341.1"/>
    <property type="molecule type" value="Genomic_DNA"/>
</dbReference>
<dbReference type="RefSeq" id="WP_000383839.1">
    <property type="nucleotide sequence ID" value="NC_012125.1"/>
</dbReference>
<dbReference type="SMR" id="C0PYS4"/>
<dbReference type="KEGG" id="sei:SPC_1175"/>
<dbReference type="HOGENOM" id="CLU_198936_0_0_6"/>
<dbReference type="Proteomes" id="UP000001599">
    <property type="component" value="Chromosome"/>
</dbReference>
<dbReference type="GO" id="GO:0005886">
    <property type="term" value="C:plasma membrane"/>
    <property type="evidence" value="ECO:0007669"/>
    <property type="project" value="UniProtKB-SubCell"/>
</dbReference>
<dbReference type="HAMAP" id="MF_01566">
    <property type="entry name" value="UPF0370"/>
    <property type="match status" value="1"/>
</dbReference>
<dbReference type="InterPro" id="IPR020910">
    <property type="entry name" value="UPF0370"/>
</dbReference>
<dbReference type="NCBIfam" id="NF010185">
    <property type="entry name" value="PRK13664.1"/>
    <property type="match status" value="1"/>
</dbReference>
<dbReference type="Pfam" id="PF13980">
    <property type="entry name" value="UPF0370"/>
    <property type="match status" value="1"/>
</dbReference>
<reference key="1">
    <citation type="journal article" date="2009" name="PLoS ONE">
        <title>Salmonella paratyphi C: genetic divergence from Salmonella choleraesuis and pathogenic convergence with Salmonella typhi.</title>
        <authorList>
            <person name="Liu W.-Q."/>
            <person name="Feng Y."/>
            <person name="Wang Y."/>
            <person name="Zou Q.-H."/>
            <person name="Chen F."/>
            <person name="Guo J.-T."/>
            <person name="Peng Y.-H."/>
            <person name="Jin Y."/>
            <person name="Li Y.-G."/>
            <person name="Hu S.-N."/>
            <person name="Johnston R.N."/>
            <person name="Liu G.-R."/>
            <person name="Liu S.-L."/>
        </authorList>
    </citation>
    <scope>NUCLEOTIDE SEQUENCE [LARGE SCALE GENOMIC DNA]</scope>
    <source>
        <strain>RKS4594</strain>
    </source>
</reference>
<sequence>MDWLAKYWWILVLVFLVGVLLNVIKDLKRIDHKKFLANKPELPPHRDFNDKWDDEDDWPKKDQPKK</sequence>
<accession>C0PYS4</accession>
<gene>
    <name evidence="1" type="primary">ypfN</name>
    <name type="ordered locus">SPC_1175</name>
</gene>
<protein>
    <recommendedName>
        <fullName evidence="1">UPF0370 protein YpfN</fullName>
    </recommendedName>
</protein>
<keyword id="KW-1003">Cell membrane</keyword>
<keyword id="KW-0472">Membrane</keyword>
<keyword id="KW-0812">Transmembrane</keyword>
<keyword id="KW-1133">Transmembrane helix</keyword>
<organism>
    <name type="scientific">Salmonella paratyphi C (strain RKS4594)</name>
    <dbReference type="NCBI Taxonomy" id="476213"/>
    <lineage>
        <taxon>Bacteria</taxon>
        <taxon>Pseudomonadati</taxon>
        <taxon>Pseudomonadota</taxon>
        <taxon>Gammaproteobacteria</taxon>
        <taxon>Enterobacterales</taxon>
        <taxon>Enterobacteriaceae</taxon>
        <taxon>Salmonella</taxon>
    </lineage>
</organism>
<name>YPFN_SALPC</name>
<proteinExistence type="inferred from homology"/>